<feature type="chain" id="PRO_0000344302" description="Small ribosomal subunit protein uS7">
    <location>
        <begin position="1"/>
        <end position="155"/>
    </location>
</feature>
<accession>A4SCQ5</accession>
<protein>
    <recommendedName>
        <fullName evidence="1">Small ribosomal subunit protein uS7</fullName>
    </recommendedName>
    <alternativeName>
        <fullName evidence="2">30S ribosomal protein S7</fullName>
    </alternativeName>
</protein>
<name>RS7_CHLPM</name>
<dbReference type="EMBL" id="CP000607">
    <property type="protein sequence ID" value="ABP36264.1"/>
    <property type="molecule type" value="Genomic_DNA"/>
</dbReference>
<dbReference type="SMR" id="A4SCQ5"/>
<dbReference type="STRING" id="290318.Cvib_0242"/>
<dbReference type="KEGG" id="pvi:Cvib_0242"/>
<dbReference type="eggNOG" id="COG0049">
    <property type="taxonomic scope" value="Bacteria"/>
</dbReference>
<dbReference type="HOGENOM" id="CLU_072226_1_1_10"/>
<dbReference type="OrthoDB" id="9807653at2"/>
<dbReference type="GO" id="GO:0015935">
    <property type="term" value="C:small ribosomal subunit"/>
    <property type="evidence" value="ECO:0007669"/>
    <property type="project" value="InterPro"/>
</dbReference>
<dbReference type="GO" id="GO:0019843">
    <property type="term" value="F:rRNA binding"/>
    <property type="evidence" value="ECO:0007669"/>
    <property type="project" value="UniProtKB-UniRule"/>
</dbReference>
<dbReference type="GO" id="GO:0003735">
    <property type="term" value="F:structural constituent of ribosome"/>
    <property type="evidence" value="ECO:0007669"/>
    <property type="project" value="InterPro"/>
</dbReference>
<dbReference type="GO" id="GO:0000049">
    <property type="term" value="F:tRNA binding"/>
    <property type="evidence" value="ECO:0007669"/>
    <property type="project" value="UniProtKB-UniRule"/>
</dbReference>
<dbReference type="GO" id="GO:0006412">
    <property type="term" value="P:translation"/>
    <property type="evidence" value="ECO:0007669"/>
    <property type="project" value="UniProtKB-UniRule"/>
</dbReference>
<dbReference type="CDD" id="cd14869">
    <property type="entry name" value="uS7_Bacteria"/>
    <property type="match status" value="1"/>
</dbReference>
<dbReference type="FunFam" id="1.10.455.10:FF:000001">
    <property type="entry name" value="30S ribosomal protein S7"/>
    <property type="match status" value="1"/>
</dbReference>
<dbReference type="Gene3D" id="1.10.455.10">
    <property type="entry name" value="Ribosomal protein S7 domain"/>
    <property type="match status" value="1"/>
</dbReference>
<dbReference type="HAMAP" id="MF_00480_B">
    <property type="entry name" value="Ribosomal_uS7_B"/>
    <property type="match status" value="1"/>
</dbReference>
<dbReference type="InterPro" id="IPR000235">
    <property type="entry name" value="Ribosomal_uS7"/>
</dbReference>
<dbReference type="InterPro" id="IPR005717">
    <property type="entry name" value="Ribosomal_uS7_bac/org-type"/>
</dbReference>
<dbReference type="InterPro" id="IPR023798">
    <property type="entry name" value="Ribosomal_uS7_dom"/>
</dbReference>
<dbReference type="InterPro" id="IPR036823">
    <property type="entry name" value="Ribosomal_uS7_dom_sf"/>
</dbReference>
<dbReference type="NCBIfam" id="TIGR01029">
    <property type="entry name" value="rpsG_bact"/>
    <property type="match status" value="1"/>
</dbReference>
<dbReference type="PANTHER" id="PTHR11205">
    <property type="entry name" value="RIBOSOMAL PROTEIN S7"/>
    <property type="match status" value="1"/>
</dbReference>
<dbReference type="Pfam" id="PF00177">
    <property type="entry name" value="Ribosomal_S7"/>
    <property type="match status" value="1"/>
</dbReference>
<dbReference type="PIRSF" id="PIRSF002122">
    <property type="entry name" value="RPS7p_RPS7a_RPS5e_RPS7o"/>
    <property type="match status" value="1"/>
</dbReference>
<dbReference type="SUPFAM" id="SSF47973">
    <property type="entry name" value="Ribosomal protein S7"/>
    <property type="match status" value="1"/>
</dbReference>
<reference key="1">
    <citation type="submission" date="2007-03" db="EMBL/GenBank/DDBJ databases">
        <title>Complete sequence of Prosthecochloris vibrioformis DSM 265.</title>
        <authorList>
            <consortium name="US DOE Joint Genome Institute"/>
            <person name="Copeland A."/>
            <person name="Lucas S."/>
            <person name="Lapidus A."/>
            <person name="Barry K."/>
            <person name="Detter J.C."/>
            <person name="Glavina del Rio T."/>
            <person name="Hammon N."/>
            <person name="Israni S."/>
            <person name="Pitluck S."/>
            <person name="Schmutz J."/>
            <person name="Larimer F."/>
            <person name="Land M."/>
            <person name="Hauser L."/>
            <person name="Mikhailova N."/>
            <person name="Li T."/>
            <person name="Overmann J."/>
            <person name="Schuster S.C."/>
            <person name="Bryant D.A."/>
            <person name="Richardson P."/>
        </authorList>
    </citation>
    <scope>NUCLEOTIDE SEQUENCE [LARGE SCALE GENOMIC DNA]</scope>
    <source>
        <strain>DSM 265 / 1930</strain>
    </source>
</reference>
<organism>
    <name type="scientific">Chlorobium phaeovibrioides (strain DSM 265 / 1930)</name>
    <name type="common">Prosthecochloris vibrioformis (strain DSM 265)</name>
    <dbReference type="NCBI Taxonomy" id="290318"/>
    <lineage>
        <taxon>Bacteria</taxon>
        <taxon>Pseudomonadati</taxon>
        <taxon>Chlorobiota</taxon>
        <taxon>Chlorobiia</taxon>
        <taxon>Chlorobiales</taxon>
        <taxon>Chlorobiaceae</taxon>
        <taxon>Chlorobium/Pelodictyon group</taxon>
        <taxon>Chlorobium</taxon>
    </lineage>
</organism>
<sequence length="155" mass="17289">MSKKGGYKRTGVDVRYGDESVARFINAVMLDGKKDVATKIVYDAFAIIGEKMTEETPLEVYHRAMSNIAPVVEVRSKRVGGATYQIPMEVKPSRRGALAFRWLKQYATKRGGRSMAEKLAAELMDAAGEQGASVKKRDEVHRMADANKAFAHFRF</sequence>
<proteinExistence type="inferred from homology"/>
<evidence type="ECO:0000255" key="1">
    <source>
        <dbReference type="HAMAP-Rule" id="MF_00480"/>
    </source>
</evidence>
<evidence type="ECO:0000305" key="2"/>
<gene>
    <name evidence="1" type="primary">rpsG</name>
    <name type="ordered locus">Cvib_0242</name>
</gene>
<keyword id="KW-0687">Ribonucleoprotein</keyword>
<keyword id="KW-0689">Ribosomal protein</keyword>
<keyword id="KW-0694">RNA-binding</keyword>
<keyword id="KW-0699">rRNA-binding</keyword>
<keyword id="KW-0820">tRNA-binding</keyword>
<comment type="function">
    <text evidence="1">One of the primary rRNA binding proteins, it binds directly to 16S rRNA where it nucleates assembly of the head domain of the 30S subunit. Is located at the subunit interface close to the decoding center, probably blocks exit of the E-site tRNA.</text>
</comment>
<comment type="subunit">
    <text evidence="1">Part of the 30S ribosomal subunit. Contacts proteins S9 and S11.</text>
</comment>
<comment type="similarity">
    <text evidence="1">Belongs to the universal ribosomal protein uS7 family.</text>
</comment>